<accession>A0LS98</accession>
<dbReference type="EC" id="2.5.1.19" evidence="1"/>
<dbReference type="EMBL" id="CP000481">
    <property type="protein sequence ID" value="ABK52308.1"/>
    <property type="molecule type" value="Genomic_DNA"/>
</dbReference>
<dbReference type="RefSeq" id="WP_011719371.1">
    <property type="nucleotide sequence ID" value="NC_008578.1"/>
</dbReference>
<dbReference type="SMR" id="A0LS98"/>
<dbReference type="FunCoup" id="A0LS98">
    <property type="interactions" value="209"/>
</dbReference>
<dbReference type="STRING" id="351607.Acel_0535"/>
<dbReference type="KEGG" id="ace:Acel_0535"/>
<dbReference type="eggNOG" id="COG0128">
    <property type="taxonomic scope" value="Bacteria"/>
</dbReference>
<dbReference type="HOGENOM" id="CLU_024321_0_0_11"/>
<dbReference type="InParanoid" id="A0LS98"/>
<dbReference type="OrthoDB" id="9809920at2"/>
<dbReference type="UniPathway" id="UPA00053">
    <property type="reaction ID" value="UER00089"/>
</dbReference>
<dbReference type="Proteomes" id="UP000008221">
    <property type="component" value="Chromosome"/>
</dbReference>
<dbReference type="GO" id="GO:0005737">
    <property type="term" value="C:cytoplasm"/>
    <property type="evidence" value="ECO:0007669"/>
    <property type="project" value="UniProtKB-SubCell"/>
</dbReference>
<dbReference type="GO" id="GO:0003866">
    <property type="term" value="F:3-phosphoshikimate 1-carboxyvinyltransferase activity"/>
    <property type="evidence" value="ECO:0007669"/>
    <property type="project" value="UniProtKB-UniRule"/>
</dbReference>
<dbReference type="GO" id="GO:0008652">
    <property type="term" value="P:amino acid biosynthetic process"/>
    <property type="evidence" value="ECO:0007669"/>
    <property type="project" value="UniProtKB-KW"/>
</dbReference>
<dbReference type="GO" id="GO:0009073">
    <property type="term" value="P:aromatic amino acid family biosynthetic process"/>
    <property type="evidence" value="ECO:0007669"/>
    <property type="project" value="UniProtKB-KW"/>
</dbReference>
<dbReference type="GO" id="GO:0009423">
    <property type="term" value="P:chorismate biosynthetic process"/>
    <property type="evidence" value="ECO:0007669"/>
    <property type="project" value="UniProtKB-UniRule"/>
</dbReference>
<dbReference type="CDD" id="cd01556">
    <property type="entry name" value="EPSP_synthase"/>
    <property type="match status" value="1"/>
</dbReference>
<dbReference type="FunFam" id="3.65.10.10:FF:000010">
    <property type="entry name" value="3-phosphoshikimate 1-carboxyvinyltransferase"/>
    <property type="match status" value="1"/>
</dbReference>
<dbReference type="FunFam" id="3.65.10.10:FF:000011">
    <property type="entry name" value="3-phosphoshikimate 1-carboxyvinyltransferase"/>
    <property type="match status" value="1"/>
</dbReference>
<dbReference type="Gene3D" id="3.65.10.10">
    <property type="entry name" value="Enolpyruvate transferase domain"/>
    <property type="match status" value="2"/>
</dbReference>
<dbReference type="HAMAP" id="MF_00210">
    <property type="entry name" value="EPSP_synth"/>
    <property type="match status" value="1"/>
</dbReference>
<dbReference type="InterPro" id="IPR001986">
    <property type="entry name" value="Enolpyruvate_Tfrase_dom"/>
</dbReference>
<dbReference type="InterPro" id="IPR036968">
    <property type="entry name" value="Enolpyruvate_Tfrase_sf"/>
</dbReference>
<dbReference type="InterPro" id="IPR006264">
    <property type="entry name" value="EPSP_synthase"/>
</dbReference>
<dbReference type="InterPro" id="IPR023193">
    <property type="entry name" value="EPSP_synthase_CS"/>
</dbReference>
<dbReference type="InterPro" id="IPR013792">
    <property type="entry name" value="RNA3'P_cycl/enolpyr_Trfase_a/b"/>
</dbReference>
<dbReference type="NCBIfam" id="TIGR01356">
    <property type="entry name" value="aroA"/>
    <property type="match status" value="1"/>
</dbReference>
<dbReference type="PANTHER" id="PTHR21090">
    <property type="entry name" value="AROM/DEHYDROQUINATE SYNTHASE"/>
    <property type="match status" value="1"/>
</dbReference>
<dbReference type="PANTHER" id="PTHR21090:SF5">
    <property type="entry name" value="PENTAFUNCTIONAL AROM POLYPEPTIDE"/>
    <property type="match status" value="1"/>
</dbReference>
<dbReference type="Pfam" id="PF00275">
    <property type="entry name" value="EPSP_synthase"/>
    <property type="match status" value="1"/>
</dbReference>
<dbReference type="PIRSF" id="PIRSF000505">
    <property type="entry name" value="EPSPS"/>
    <property type="match status" value="1"/>
</dbReference>
<dbReference type="SUPFAM" id="SSF55205">
    <property type="entry name" value="EPT/RTPC-like"/>
    <property type="match status" value="1"/>
</dbReference>
<dbReference type="PROSITE" id="PS00104">
    <property type="entry name" value="EPSP_SYNTHASE_1"/>
    <property type="match status" value="1"/>
</dbReference>
<dbReference type="PROSITE" id="PS00885">
    <property type="entry name" value="EPSP_SYNTHASE_2"/>
    <property type="match status" value="1"/>
</dbReference>
<organism>
    <name type="scientific">Acidothermus cellulolyticus (strain ATCC 43068 / DSM 8971 / 11B)</name>
    <dbReference type="NCBI Taxonomy" id="351607"/>
    <lineage>
        <taxon>Bacteria</taxon>
        <taxon>Bacillati</taxon>
        <taxon>Actinomycetota</taxon>
        <taxon>Actinomycetes</taxon>
        <taxon>Acidothermales</taxon>
        <taxon>Acidothermaceae</taxon>
        <taxon>Acidothermus</taxon>
    </lineage>
</organism>
<feature type="chain" id="PRO_1000099658" description="3-phosphoshikimate 1-carboxyvinyltransferase">
    <location>
        <begin position="1"/>
        <end position="423"/>
    </location>
</feature>
<feature type="active site" description="Proton acceptor" evidence="1">
    <location>
        <position position="312"/>
    </location>
</feature>
<feature type="binding site" evidence="1">
    <location>
        <position position="28"/>
    </location>
    <ligand>
        <name>3-phosphoshikimate</name>
        <dbReference type="ChEBI" id="CHEBI:145989"/>
    </ligand>
</feature>
<feature type="binding site" evidence="1">
    <location>
        <position position="28"/>
    </location>
    <ligand>
        <name>phosphoenolpyruvate</name>
        <dbReference type="ChEBI" id="CHEBI:58702"/>
    </ligand>
</feature>
<feature type="binding site" evidence="1">
    <location>
        <position position="29"/>
    </location>
    <ligand>
        <name>3-phosphoshikimate</name>
        <dbReference type="ChEBI" id="CHEBI:145989"/>
    </ligand>
</feature>
<feature type="binding site" evidence="1">
    <location>
        <position position="33"/>
    </location>
    <ligand>
        <name>3-phosphoshikimate</name>
        <dbReference type="ChEBI" id="CHEBI:145989"/>
    </ligand>
</feature>
<feature type="binding site" evidence="1">
    <location>
        <position position="96"/>
    </location>
    <ligand>
        <name>phosphoenolpyruvate</name>
        <dbReference type="ChEBI" id="CHEBI:58702"/>
    </ligand>
</feature>
<feature type="binding site" evidence="1">
    <location>
        <position position="124"/>
    </location>
    <ligand>
        <name>phosphoenolpyruvate</name>
        <dbReference type="ChEBI" id="CHEBI:58702"/>
    </ligand>
</feature>
<feature type="binding site" evidence="1">
    <location>
        <position position="169"/>
    </location>
    <ligand>
        <name>3-phosphoshikimate</name>
        <dbReference type="ChEBI" id="CHEBI:145989"/>
    </ligand>
</feature>
<feature type="binding site" evidence="1">
    <location>
        <position position="170"/>
    </location>
    <ligand>
        <name>3-phosphoshikimate</name>
        <dbReference type="ChEBI" id="CHEBI:145989"/>
    </ligand>
</feature>
<feature type="binding site" evidence="1">
    <location>
        <position position="171"/>
    </location>
    <ligand>
        <name>3-phosphoshikimate</name>
        <dbReference type="ChEBI" id="CHEBI:145989"/>
    </ligand>
</feature>
<feature type="binding site" evidence="1">
    <location>
        <position position="171"/>
    </location>
    <ligand>
        <name>phosphoenolpyruvate</name>
        <dbReference type="ChEBI" id="CHEBI:58702"/>
    </ligand>
</feature>
<feature type="binding site" evidence="1">
    <location>
        <position position="198"/>
    </location>
    <ligand>
        <name>3-phosphoshikimate</name>
        <dbReference type="ChEBI" id="CHEBI:145989"/>
    </ligand>
</feature>
<feature type="binding site" evidence="1">
    <location>
        <position position="312"/>
    </location>
    <ligand>
        <name>3-phosphoshikimate</name>
        <dbReference type="ChEBI" id="CHEBI:145989"/>
    </ligand>
</feature>
<feature type="binding site" evidence="1">
    <location>
        <position position="339"/>
    </location>
    <ligand>
        <name>3-phosphoshikimate</name>
        <dbReference type="ChEBI" id="CHEBI:145989"/>
    </ligand>
</feature>
<feature type="binding site" evidence="1">
    <location>
        <position position="343"/>
    </location>
    <ligand>
        <name>phosphoenolpyruvate</name>
        <dbReference type="ChEBI" id="CHEBI:58702"/>
    </ligand>
</feature>
<feature type="binding site" evidence="1">
    <location>
        <position position="384"/>
    </location>
    <ligand>
        <name>phosphoenolpyruvate</name>
        <dbReference type="ChEBI" id="CHEBI:58702"/>
    </ligand>
</feature>
<feature type="binding site" evidence="1">
    <location>
        <position position="409"/>
    </location>
    <ligand>
        <name>phosphoenolpyruvate</name>
        <dbReference type="ChEBI" id="CHEBI:58702"/>
    </ligand>
</feature>
<reference key="1">
    <citation type="journal article" date="2009" name="Genome Res.">
        <title>Complete genome of the cellulolytic thermophile Acidothermus cellulolyticus 11B provides insights into its ecophysiological and evolutionary adaptations.</title>
        <authorList>
            <person name="Barabote R.D."/>
            <person name="Xie G."/>
            <person name="Leu D.H."/>
            <person name="Normand P."/>
            <person name="Necsulea A."/>
            <person name="Daubin V."/>
            <person name="Medigue C."/>
            <person name="Adney W.S."/>
            <person name="Xu X.C."/>
            <person name="Lapidus A."/>
            <person name="Parales R.E."/>
            <person name="Detter C."/>
            <person name="Pujic P."/>
            <person name="Bruce D."/>
            <person name="Lavire C."/>
            <person name="Challacombe J.F."/>
            <person name="Brettin T.S."/>
            <person name="Berry A.M."/>
        </authorList>
    </citation>
    <scope>NUCLEOTIDE SEQUENCE [LARGE SCALE GENOMIC DNA]</scope>
    <source>
        <strain>ATCC 43068 / DSM 8971 / 11B</strain>
    </source>
</reference>
<gene>
    <name evidence="1" type="primary">aroA</name>
    <name type="ordered locus">Acel_0535</name>
</gene>
<sequence length="423" mass="44002">MTTTELTGWPAPTASGRVDAVVHLPGSKSMTNRALVLAALAAEPTAIRGGLRARDTELMMAGLRSLGVGIDDAGDMWLVSPAELRGPAAIDCGLAGTVMRFLLAAATLATGEVSFDGDPRARERPLRPLLDALRQLGAELRDTGGRLPVTVVGSGHLPGGHCVVDASASSQFVSALLLVAPRADTPVTVGHVGRTLPSVPHITMTVAMLRERGVEVAGTDGSWRVQPGPIRGGTVQIEPDLSNAAPFLAAALVTGGRVRVPDWPMRTTQAGDALRDLLTAMGARCELDATGLTVTGGPVIHGLDADLRDVSELVPTLAALAALADRPSTFRGIGHMRGHETDRLAALAAELTRLGGDVTATDDGLVIRPRPLHGGVFHSYGDHRMATTGAVLGLVIPGIVVENIQTVAKTMPTFVELWTGMLR</sequence>
<keyword id="KW-0028">Amino-acid biosynthesis</keyword>
<keyword id="KW-0057">Aromatic amino acid biosynthesis</keyword>
<keyword id="KW-0963">Cytoplasm</keyword>
<keyword id="KW-1185">Reference proteome</keyword>
<keyword id="KW-0808">Transferase</keyword>
<comment type="function">
    <text evidence="1">Catalyzes the transfer of the enolpyruvyl moiety of phosphoenolpyruvate (PEP) to the 5-hydroxyl of shikimate-3-phosphate (S3P) to produce enolpyruvyl shikimate-3-phosphate and inorganic phosphate.</text>
</comment>
<comment type="catalytic activity">
    <reaction evidence="1">
        <text>3-phosphoshikimate + phosphoenolpyruvate = 5-O-(1-carboxyvinyl)-3-phosphoshikimate + phosphate</text>
        <dbReference type="Rhea" id="RHEA:21256"/>
        <dbReference type="ChEBI" id="CHEBI:43474"/>
        <dbReference type="ChEBI" id="CHEBI:57701"/>
        <dbReference type="ChEBI" id="CHEBI:58702"/>
        <dbReference type="ChEBI" id="CHEBI:145989"/>
        <dbReference type="EC" id="2.5.1.19"/>
    </reaction>
    <physiologicalReaction direction="left-to-right" evidence="1">
        <dbReference type="Rhea" id="RHEA:21257"/>
    </physiologicalReaction>
</comment>
<comment type="pathway">
    <text evidence="1">Metabolic intermediate biosynthesis; chorismate biosynthesis; chorismate from D-erythrose 4-phosphate and phosphoenolpyruvate: step 6/7.</text>
</comment>
<comment type="subunit">
    <text evidence="1">Monomer.</text>
</comment>
<comment type="subcellular location">
    <subcellularLocation>
        <location evidence="1">Cytoplasm</location>
    </subcellularLocation>
</comment>
<comment type="similarity">
    <text evidence="1">Belongs to the EPSP synthase family.</text>
</comment>
<protein>
    <recommendedName>
        <fullName evidence="1">3-phosphoshikimate 1-carboxyvinyltransferase</fullName>
        <ecNumber evidence="1">2.5.1.19</ecNumber>
    </recommendedName>
    <alternativeName>
        <fullName evidence="1">5-enolpyruvylshikimate-3-phosphate synthase</fullName>
        <shortName evidence="1">EPSP synthase</shortName>
        <shortName evidence="1">EPSPS</shortName>
    </alternativeName>
</protein>
<evidence type="ECO:0000255" key="1">
    <source>
        <dbReference type="HAMAP-Rule" id="MF_00210"/>
    </source>
</evidence>
<name>AROA_ACIC1</name>
<proteinExistence type="inferred from homology"/>